<reference key="1">
    <citation type="journal article" date="2004" name="Gene Expr. Patterns">
        <title>Identification and comparative expression analyses of Daam genes in mouse and Xenopus.</title>
        <authorList>
            <person name="Nakaya M.-A."/>
            <person name="Habas R."/>
            <person name="Biris K."/>
            <person name="Dunty W.C. Jr."/>
            <person name="Kato Y."/>
            <person name="He X."/>
            <person name="Yamaguchi T.P."/>
        </authorList>
    </citation>
    <scope>NUCLEOTIDE SEQUENCE [MRNA] (ISOFORM 1)</scope>
    <scope>TISSUE SPECIFICITY</scope>
</reference>
<reference key="2">
    <citation type="journal article" date="2005" name="Science">
        <title>The transcriptional landscape of the mammalian genome.</title>
        <authorList>
            <person name="Carninci P."/>
            <person name="Kasukawa T."/>
            <person name="Katayama S."/>
            <person name="Gough J."/>
            <person name="Frith M.C."/>
            <person name="Maeda N."/>
            <person name="Oyama R."/>
            <person name="Ravasi T."/>
            <person name="Lenhard B."/>
            <person name="Wells C."/>
            <person name="Kodzius R."/>
            <person name="Shimokawa K."/>
            <person name="Bajic V.B."/>
            <person name="Brenner S.E."/>
            <person name="Batalov S."/>
            <person name="Forrest A.R."/>
            <person name="Zavolan M."/>
            <person name="Davis M.J."/>
            <person name="Wilming L.G."/>
            <person name="Aidinis V."/>
            <person name="Allen J.E."/>
            <person name="Ambesi-Impiombato A."/>
            <person name="Apweiler R."/>
            <person name="Aturaliya R.N."/>
            <person name="Bailey T.L."/>
            <person name="Bansal M."/>
            <person name="Baxter L."/>
            <person name="Beisel K.W."/>
            <person name="Bersano T."/>
            <person name="Bono H."/>
            <person name="Chalk A.M."/>
            <person name="Chiu K.P."/>
            <person name="Choudhary V."/>
            <person name="Christoffels A."/>
            <person name="Clutterbuck D.R."/>
            <person name="Crowe M.L."/>
            <person name="Dalla E."/>
            <person name="Dalrymple B.P."/>
            <person name="de Bono B."/>
            <person name="Della Gatta G."/>
            <person name="di Bernardo D."/>
            <person name="Down T."/>
            <person name="Engstrom P."/>
            <person name="Fagiolini M."/>
            <person name="Faulkner G."/>
            <person name="Fletcher C.F."/>
            <person name="Fukushima T."/>
            <person name="Furuno M."/>
            <person name="Futaki S."/>
            <person name="Gariboldi M."/>
            <person name="Georgii-Hemming P."/>
            <person name="Gingeras T.R."/>
            <person name="Gojobori T."/>
            <person name="Green R.E."/>
            <person name="Gustincich S."/>
            <person name="Harbers M."/>
            <person name="Hayashi Y."/>
            <person name="Hensch T.K."/>
            <person name="Hirokawa N."/>
            <person name="Hill D."/>
            <person name="Huminiecki L."/>
            <person name="Iacono M."/>
            <person name="Ikeo K."/>
            <person name="Iwama A."/>
            <person name="Ishikawa T."/>
            <person name="Jakt M."/>
            <person name="Kanapin A."/>
            <person name="Katoh M."/>
            <person name="Kawasawa Y."/>
            <person name="Kelso J."/>
            <person name="Kitamura H."/>
            <person name="Kitano H."/>
            <person name="Kollias G."/>
            <person name="Krishnan S.P."/>
            <person name="Kruger A."/>
            <person name="Kummerfeld S.K."/>
            <person name="Kurochkin I.V."/>
            <person name="Lareau L.F."/>
            <person name="Lazarevic D."/>
            <person name="Lipovich L."/>
            <person name="Liu J."/>
            <person name="Liuni S."/>
            <person name="McWilliam S."/>
            <person name="Madan Babu M."/>
            <person name="Madera M."/>
            <person name="Marchionni L."/>
            <person name="Matsuda H."/>
            <person name="Matsuzawa S."/>
            <person name="Miki H."/>
            <person name="Mignone F."/>
            <person name="Miyake S."/>
            <person name="Morris K."/>
            <person name="Mottagui-Tabar S."/>
            <person name="Mulder N."/>
            <person name="Nakano N."/>
            <person name="Nakauchi H."/>
            <person name="Ng P."/>
            <person name="Nilsson R."/>
            <person name="Nishiguchi S."/>
            <person name="Nishikawa S."/>
            <person name="Nori F."/>
            <person name="Ohara O."/>
            <person name="Okazaki Y."/>
            <person name="Orlando V."/>
            <person name="Pang K.C."/>
            <person name="Pavan W.J."/>
            <person name="Pavesi G."/>
            <person name="Pesole G."/>
            <person name="Petrovsky N."/>
            <person name="Piazza S."/>
            <person name="Reed J."/>
            <person name="Reid J.F."/>
            <person name="Ring B.Z."/>
            <person name="Ringwald M."/>
            <person name="Rost B."/>
            <person name="Ruan Y."/>
            <person name="Salzberg S.L."/>
            <person name="Sandelin A."/>
            <person name="Schneider C."/>
            <person name="Schoenbach C."/>
            <person name="Sekiguchi K."/>
            <person name="Semple C.A."/>
            <person name="Seno S."/>
            <person name="Sessa L."/>
            <person name="Sheng Y."/>
            <person name="Shibata Y."/>
            <person name="Shimada H."/>
            <person name="Shimada K."/>
            <person name="Silva D."/>
            <person name="Sinclair B."/>
            <person name="Sperling S."/>
            <person name="Stupka E."/>
            <person name="Sugiura K."/>
            <person name="Sultana R."/>
            <person name="Takenaka Y."/>
            <person name="Taki K."/>
            <person name="Tammoja K."/>
            <person name="Tan S.L."/>
            <person name="Tang S."/>
            <person name="Taylor M.S."/>
            <person name="Tegner J."/>
            <person name="Teichmann S.A."/>
            <person name="Ueda H.R."/>
            <person name="van Nimwegen E."/>
            <person name="Verardo R."/>
            <person name="Wei C.L."/>
            <person name="Yagi K."/>
            <person name="Yamanishi H."/>
            <person name="Zabarovsky E."/>
            <person name="Zhu S."/>
            <person name="Zimmer A."/>
            <person name="Hide W."/>
            <person name="Bult C."/>
            <person name="Grimmond S.M."/>
            <person name="Teasdale R.D."/>
            <person name="Liu E.T."/>
            <person name="Brusic V."/>
            <person name="Quackenbush J."/>
            <person name="Wahlestedt C."/>
            <person name="Mattick J.S."/>
            <person name="Hume D.A."/>
            <person name="Kai C."/>
            <person name="Sasaki D."/>
            <person name="Tomaru Y."/>
            <person name="Fukuda S."/>
            <person name="Kanamori-Katayama M."/>
            <person name="Suzuki M."/>
            <person name="Aoki J."/>
            <person name="Arakawa T."/>
            <person name="Iida J."/>
            <person name="Imamura K."/>
            <person name="Itoh M."/>
            <person name="Kato T."/>
            <person name="Kawaji H."/>
            <person name="Kawagashira N."/>
            <person name="Kawashima T."/>
            <person name="Kojima M."/>
            <person name="Kondo S."/>
            <person name="Konno H."/>
            <person name="Nakano K."/>
            <person name="Ninomiya N."/>
            <person name="Nishio T."/>
            <person name="Okada M."/>
            <person name="Plessy C."/>
            <person name="Shibata K."/>
            <person name="Shiraki T."/>
            <person name="Suzuki S."/>
            <person name="Tagami M."/>
            <person name="Waki K."/>
            <person name="Watahiki A."/>
            <person name="Okamura-Oho Y."/>
            <person name="Suzuki H."/>
            <person name="Kawai J."/>
            <person name="Hayashizaki Y."/>
        </authorList>
    </citation>
    <scope>NUCLEOTIDE SEQUENCE [LARGE SCALE MRNA] (ISOFORMS 2 AND 3)</scope>
    <source>
        <strain>C57BL/6J</strain>
        <tissue>Eye</tissue>
        <tissue>Placenta</tissue>
        <tissue>Testis</tissue>
    </source>
</reference>
<reference key="3">
    <citation type="journal article" date="2004" name="Genome Res.">
        <title>The status, quality, and expansion of the NIH full-length cDNA project: the Mammalian Gene Collection (MGC).</title>
        <authorList>
            <consortium name="The MGC Project Team"/>
        </authorList>
    </citation>
    <scope>NUCLEOTIDE SEQUENCE [LARGE SCALE MRNA] (ISOFORM 1)</scope>
    <scope>NUCLEOTIDE SEQUENCE [LARGE SCALE MRNA] OF 592-1077 (ISOFORM 2)</scope>
    <source>
        <strain>C57BL/6J</strain>
        <tissue>Brain</tissue>
        <tissue>Retina</tissue>
    </source>
</reference>
<reference key="4">
    <citation type="journal article" date="2004" name="Brain Res. Dev. Brain Res.">
        <title>Identification of chick and mouse Daam1 and Daam2 genes and their expression patterns in the central nervous system.</title>
        <authorList>
            <person name="Kida Y."/>
            <person name="Shiraishi T."/>
            <person name="Ogura T."/>
        </authorList>
    </citation>
    <scope>TISSUE SPECIFICITY</scope>
</reference>
<reference key="5">
    <citation type="journal article" date="2010" name="Cell">
        <title>A tissue-specific atlas of mouse protein phosphorylation and expression.</title>
        <authorList>
            <person name="Huttlin E.L."/>
            <person name="Jedrychowski M.P."/>
            <person name="Elias J.E."/>
            <person name="Goswami T."/>
            <person name="Rad R."/>
            <person name="Beausoleil S.A."/>
            <person name="Villen J."/>
            <person name="Haas W."/>
            <person name="Sowa M.E."/>
            <person name="Gygi S.P."/>
        </authorList>
    </citation>
    <scope>PHOSPHORYLATION [LARGE SCALE ANALYSIS] AT SER-1029</scope>
    <scope>IDENTIFICATION BY MASS SPECTROMETRY [LARGE SCALE ANALYSIS]</scope>
    <source>
        <tissue>Brain</tissue>
        <tissue>Heart</tissue>
        <tissue>Kidney</tissue>
        <tissue>Liver</tissue>
        <tissue>Lung</tissue>
        <tissue>Pancreas</tissue>
        <tissue>Spleen</tissue>
    </source>
</reference>
<reference key="6">
    <citation type="journal article" date="2015" name="Dev. Biol.">
        <title>DAAM1 and DAAM2 are co-required for myocardial maturation and sarcomere assembly.</title>
        <authorList>
            <person name="Ajima R."/>
            <person name="Bisson J.A."/>
            <person name="Helt J.C."/>
            <person name="Nakaya M.A."/>
            <person name="Habas R."/>
            <person name="Tessarollo L."/>
            <person name="He X."/>
            <person name="Morrisey E.E."/>
            <person name="Yamaguchi T.P."/>
            <person name="Cohen E.D."/>
        </authorList>
    </citation>
    <scope>FUNCTION</scope>
    <scope>DEVELOPMENTAL STAGE</scope>
    <scope>DISRUPTION PHENOTYPE</scope>
</reference>
<reference key="7">
    <citation type="journal article" date="2017" name="Exp. Cell Res.">
        <title>Depletion of tumor suppressor Kank1 induces centrosomal amplification via hyperactivation of RhoA.</title>
        <authorList>
            <person name="Suzuki J.I."/>
            <person name="Roy B.C."/>
            <person name="Ogaeri T."/>
            <person name="Kakinuma N."/>
            <person name="Kiyama R."/>
        </authorList>
    </citation>
    <scope>FUNCTION</scope>
    <scope>SUBCELLULAR LOCATION</scope>
</reference>
<reference key="8">
    <citation type="journal article" date="2023" name="Biomolecules">
        <title>D-Aspartate Depletion Perturbs Steroidogenesis and Spermatogenesis in Mice.</title>
        <authorList>
            <person name="Santillo A."/>
            <person name="Falvo S."/>
            <person name="Venditti M."/>
            <person name="Di Maio A."/>
            <person name="Chieffi Baccari G."/>
            <person name="Errico F."/>
            <person name="Usiello A."/>
            <person name="Minucci S."/>
            <person name="Di Fiore M.M."/>
        </authorList>
    </citation>
    <scope>SUBCELLULAR LOCATION</scope>
</reference>
<proteinExistence type="evidence at protein level"/>
<keyword id="KW-0009">Actin-binding</keyword>
<keyword id="KW-0025">Alternative splicing</keyword>
<keyword id="KW-0966">Cell projection</keyword>
<keyword id="KW-0175">Coiled coil</keyword>
<keyword id="KW-0963">Cytoplasm</keyword>
<keyword id="KW-0206">Cytoskeleton</keyword>
<keyword id="KW-0597">Phosphoprotein</keyword>
<keyword id="KW-1185">Reference proteome</keyword>
<keyword id="KW-0879">Wnt signaling pathway</keyword>
<accession>Q8BPM0</accession>
<accession>Q3UHB4</accession>
<accession>Q6DFY0</accession>
<accession>Q6TAB8</accession>
<accession>Q80Y68</accession>
<accession>Q9CQQ2</accession>
<feature type="chain" id="PRO_0000194908" description="Disheveled-associated activator of morphogenesis 1">
    <location>
        <begin position="1"/>
        <end position="1077"/>
    </location>
</feature>
<feature type="domain" description="GBD/FH3" evidence="7">
    <location>
        <begin position="45"/>
        <end position="420"/>
    </location>
</feature>
<feature type="domain" description="FH1">
    <location>
        <begin position="528"/>
        <end position="599"/>
    </location>
</feature>
<feature type="domain" description="FH2" evidence="8">
    <location>
        <begin position="600"/>
        <end position="1008"/>
    </location>
</feature>
<feature type="domain" description="DAD" evidence="6">
    <location>
        <begin position="1026"/>
        <end position="1057"/>
    </location>
</feature>
<feature type="region of interest" description="Disordered" evidence="9">
    <location>
        <begin position="457"/>
        <end position="478"/>
    </location>
</feature>
<feature type="region of interest" description="Disordered" evidence="9">
    <location>
        <begin position="526"/>
        <end position="596"/>
    </location>
</feature>
<feature type="region of interest" description="Actin-binding" evidence="1">
    <location>
        <begin position="693"/>
        <end position="702"/>
    </location>
</feature>
<feature type="region of interest" description="Disordered" evidence="9">
    <location>
        <begin position="1007"/>
        <end position="1033"/>
    </location>
</feature>
<feature type="region of interest" description="Disordered" evidence="9">
    <location>
        <begin position="1056"/>
        <end position="1077"/>
    </location>
</feature>
<feature type="coiled-coil region" evidence="5">
    <location>
        <begin position="437"/>
        <end position="526"/>
    </location>
</feature>
<feature type="compositionally biased region" description="Pro residues" evidence="9">
    <location>
        <begin position="530"/>
        <end position="539"/>
    </location>
</feature>
<feature type="compositionally biased region" description="Pro residues" evidence="9">
    <location>
        <begin position="549"/>
        <end position="592"/>
    </location>
</feature>
<feature type="compositionally biased region" description="Basic and acidic residues" evidence="9">
    <location>
        <begin position="1007"/>
        <end position="1026"/>
    </location>
</feature>
<feature type="compositionally biased region" description="Basic and acidic residues" evidence="9">
    <location>
        <begin position="1066"/>
        <end position="1077"/>
    </location>
</feature>
<feature type="modified residue" description="Phosphoserine" evidence="4">
    <location>
        <position position="34"/>
    </location>
</feature>
<feature type="modified residue" description="Phosphoserine" evidence="4">
    <location>
        <position position="1026"/>
    </location>
</feature>
<feature type="modified residue" description="Phosphoserine" evidence="18">
    <location>
        <position position="1029"/>
    </location>
</feature>
<feature type="splice variant" id="VSP_027771" description="In isoform 2." evidence="15 16">
    <location>
        <begin position="657"/>
        <end position="665"/>
    </location>
</feature>
<feature type="splice variant" id="VSP_027772" description="In isoform 3." evidence="16">
    <original>EFF</original>
    <variation>VTT</variation>
    <location>
        <begin position="657"/>
        <end position="659"/>
    </location>
</feature>
<feature type="splice variant" id="VSP_027773" description="In isoform 3." evidence="16">
    <location>
        <begin position="660"/>
        <end position="1077"/>
    </location>
</feature>
<feature type="sequence conflict" description="In Ref. 1; AAR05118." evidence="17" ref="1">
    <original>F</original>
    <variation>L</variation>
    <location>
        <position position="36"/>
    </location>
</feature>
<feature type="sequence conflict" description="In Ref. 2; BAC35522." evidence="17" ref="2">
    <original>P</original>
    <variation>A</variation>
    <location>
        <position position="571"/>
    </location>
</feature>
<feature type="sequence conflict" description="In Ref. 2; BAE27943." evidence="17" ref="2">
    <original>E</original>
    <variation>G</variation>
    <location>
        <position position="894"/>
    </location>
</feature>
<evidence type="ECO:0000250" key="1"/>
<evidence type="ECO:0000250" key="2">
    <source>
        <dbReference type="UniProtKB" id="B0DOB5"/>
    </source>
</evidence>
<evidence type="ECO:0000250" key="3">
    <source>
        <dbReference type="UniProtKB" id="O08808"/>
    </source>
</evidence>
<evidence type="ECO:0000250" key="4">
    <source>
        <dbReference type="UniProtKB" id="Q9Y4D1"/>
    </source>
</evidence>
<evidence type="ECO:0000255" key="5"/>
<evidence type="ECO:0000255" key="6">
    <source>
        <dbReference type="PROSITE-ProRule" id="PRU00577"/>
    </source>
</evidence>
<evidence type="ECO:0000255" key="7">
    <source>
        <dbReference type="PROSITE-ProRule" id="PRU00579"/>
    </source>
</evidence>
<evidence type="ECO:0000255" key="8">
    <source>
        <dbReference type="PROSITE-ProRule" id="PRU00774"/>
    </source>
</evidence>
<evidence type="ECO:0000256" key="9">
    <source>
        <dbReference type="SAM" id="MobiDB-lite"/>
    </source>
</evidence>
<evidence type="ECO:0000269" key="10">
    <source>
    </source>
</evidence>
<evidence type="ECO:0000269" key="11">
    <source>
    </source>
</evidence>
<evidence type="ECO:0000269" key="12">
    <source>
    </source>
</evidence>
<evidence type="ECO:0000269" key="13">
    <source>
    </source>
</evidence>
<evidence type="ECO:0000269" key="14">
    <source>
    </source>
</evidence>
<evidence type="ECO:0000303" key="15">
    <source>
    </source>
</evidence>
<evidence type="ECO:0000303" key="16">
    <source>
    </source>
</evidence>
<evidence type="ECO:0000305" key="17"/>
<evidence type="ECO:0007744" key="18">
    <source>
    </source>
</evidence>
<organism>
    <name type="scientific">Mus musculus</name>
    <name type="common">Mouse</name>
    <dbReference type="NCBI Taxonomy" id="10090"/>
    <lineage>
        <taxon>Eukaryota</taxon>
        <taxon>Metazoa</taxon>
        <taxon>Chordata</taxon>
        <taxon>Craniata</taxon>
        <taxon>Vertebrata</taxon>
        <taxon>Euteleostomi</taxon>
        <taxon>Mammalia</taxon>
        <taxon>Eutheria</taxon>
        <taxon>Euarchontoglires</taxon>
        <taxon>Glires</taxon>
        <taxon>Rodentia</taxon>
        <taxon>Myomorpha</taxon>
        <taxon>Muroidea</taxon>
        <taxon>Muridae</taxon>
        <taxon>Murinae</taxon>
        <taxon>Mus</taxon>
        <taxon>Mus</taxon>
    </lineage>
</organism>
<dbReference type="EMBL" id="AY426535">
    <property type="protein sequence ID" value="AAR05118.1"/>
    <property type="molecule type" value="mRNA"/>
</dbReference>
<dbReference type="EMBL" id="AK006902">
    <property type="protein sequence ID" value="BAB24785.1"/>
    <property type="molecule type" value="mRNA"/>
</dbReference>
<dbReference type="EMBL" id="AK018919">
    <property type="protein sequence ID" value="BAB31482.1"/>
    <property type="molecule type" value="mRNA"/>
</dbReference>
<dbReference type="EMBL" id="AK018950">
    <property type="protein sequence ID" value="BAB31491.1"/>
    <property type="molecule type" value="mRNA"/>
</dbReference>
<dbReference type="EMBL" id="AK053785">
    <property type="protein sequence ID" value="BAC35522.1"/>
    <property type="molecule type" value="mRNA"/>
</dbReference>
<dbReference type="EMBL" id="AK147480">
    <property type="protein sequence ID" value="BAE27943.1"/>
    <property type="molecule type" value="mRNA"/>
</dbReference>
<dbReference type="EMBL" id="BC032287">
    <property type="status" value="NOT_ANNOTATED_CDS"/>
    <property type="molecule type" value="mRNA"/>
</dbReference>
<dbReference type="EMBL" id="BC048856">
    <property type="protein sequence ID" value="AAH48856.1"/>
    <property type="status" value="ALT_INIT"/>
    <property type="molecule type" value="mRNA"/>
</dbReference>
<dbReference type="EMBL" id="BC076585">
    <property type="protein sequence ID" value="AAH76585.1"/>
    <property type="molecule type" value="mRNA"/>
</dbReference>
<dbReference type="CCDS" id="CCDS25964.1">
    <molecule id="Q8BPM0-1"/>
</dbReference>
<dbReference type="CCDS" id="CCDS88349.1">
    <molecule id="Q8BPM0-2"/>
</dbReference>
<dbReference type="RefSeq" id="NP_001273381.1">
    <molecule id="Q8BPM0-2"/>
    <property type="nucleotide sequence ID" value="NM_001286452.1"/>
</dbReference>
<dbReference type="RefSeq" id="NP_001409774.1">
    <molecule id="Q8BPM0-2"/>
    <property type="nucleotide sequence ID" value="NM_001422845.1"/>
</dbReference>
<dbReference type="RefSeq" id="NP_001409775.1">
    <molecule id="Q8BPM0-2"/>
    <property type="nucleotide sequence ID" value="NM_001422846.1"/>
</dbReference>
<dbReference type="RefSeq" id="NP_080378.2">
    <molecule id="Q8BPM0-1"/>
    <property type="nucleotide sequence ID" value="NM_026102.3"/>
</dbReference>
<dbReference type="RefSeq" id="NP_766052.2">
    <molecule id="Q8BPM0-1"/>
    <property type="nucleotide sequence ID" value="NM_172464.3"/>
</dbReference>
<dbReference type="RefSeq" id="XP_006515705.1">
    <molecule id="Q8BPM0-1"/>
    <property type="nucleotide sequence ID" value="XM_006515642.4"/>
</dbReference>
<dbReference type="RefSeq" id="XP_006515706.1">
    <property type="nucleotide sequence ID" value="XM_006515643.3"/>
</dbReference>
<dbReference type="RefSeq" id="XP_006515707.1">
    <property type="nucleotide sequence ID" value="XM_006515644.3"/>
</dbReference>
<dbReference type="RefSeq" id="XP_030102496.1">
    <molecule id="Q8BPM0-1"/>
    <property type="nucleotide sequence ID" value="XM_030246636.1"/>
</dbReference>
<dbReference type="RefSeq" id="XP_036013189.1">
    <molecule id="Q8BPM0-1"/>
    <property type="nucleotide sequence ID" value="XM_036157296.1"/>
</dbReference>
<dbReference type="RefSeq" id="XP_036013190.1">
    <molecule id="Q8BPM0-1"/>
    <property type="nucleotide sequence ID" value="XM_036157297.1"/>
</dbReference>
<dbReference type="SMR" id="Q8BPM0"/>
<dbReference type="BioGRID" id="229018">
    <property type="interactions" value="19"/>
</dbReference>
<dbReference type="FunCoup" id="Q8BPM0">
    <property type="interactions" value="1165"/>
</dbReference>
<dbReference type="IntAct" id="Q8BPM0">
    <property type="interactions" value="1"/>
</dbReference>
<dbReference type="STRING" id="10090.ENSMUSP00000082406"/>
<dbReference type="GlyGen" id="Q8BPM0">
    <property type="glycosylation" value="3 sites, 1 N-linked glycan (2 sites), 1 O-linked glycan (1 site)"/>
</dbReference>
<dbReference type="iPTMnet" id="Q8BPM0"/>
<dbReference type="PhosphoSitePlus" id="Q8BPM0"/>
<dbReference type="SwissPalm" id="Q8BPM0"/>
<dbReference type="PaxDb" id="10090-ENSMUSP00000082406"/>
<dbReference type="PeptideAtlas" id="Q8BPM0"/>
<dbReference type="ProteomicsDB" id="279146">
    <molecule id="Q8BPM0-1"/>
</dbReference>
<dbReference type="ProteomicsDB" id="279147">
    <molecule id="Q8BPM0-2"/>
</dbReference>
<dbReference type="ProteomicsDB" id="279148">
    <molecule id="Q8BPM0-3"/>
</dbReference>
<dbReference type="Pumba" id="Q8BPM0"/>
<dbReference type="Antibodypedia" id="11379">
    <property type="antibodies" value="343 antibodies from 31 providers"/>
</dbReference>
<dbReference type="DNASU" id="208846"/>
<dbReference type="Ensembl" id="ENSMUST00000085299.4">
    <molecule id="Q8BPM0-1"/>
    <property type="protein sequence ID" value="ENSMUSP00000082406.3"/>
    <property type="gene ID" value="ENSMUSG00000034574.11"/>
</dbReference>
<dbReference type="Ensembl" id="ENSMUST00000221317.2">
    <molecule id="Q8BPM0-2"/>
    <property type="protein sequence ID" value="ENSMUSP00000152532.2"/>
    <property type="gene ID" value="ENSMUSG00000034574.11"/>
</dbReference>
<dbReference type="Ensembl" id="ENSMUST00000223272.2">
    <molecule id="Q8BPM0-1"/>
    <property type="protein sequence ID" value="ENSMUSP00000152564.2"/>
    <property type="gene ID" value="ENSMUSG00000034574.11"/>
</dbReference>
<dbReference type="GeneID" id="208846"/>
<dbReference type="KEGG" id="mmu:208846"/>
<dbReference type="UCSC" id="uc007nuw.2">
    <molecule id="Q8BPM0-3"/>
    <property type="organism name" value="mouse"/>
</dbReference>
<dbReference type="UCSC" id="uc007nux.2">
    <molecule id="Q8BPM0-1"/>
    <property type="organism name" value="mouse"/>
</dbReference>
<dbReference type="UCSC" id="uc007nuz.2">
    <molecule id="Q8BPM0-2"/>
    <property type="organism name" value="mouse"/>
</dbReference>
<dbReference type="AGR" id="MGI:1914596"/>
<dbReference type="CTD" id="23002"/>
<dbReference type="MGI" id="MGI:1914596">
    <property type="gene designation" value="Daam1"/>
</dbReference>
<dbReference type="VEuPathDB" id="HostDB:ENSMUSG00000034574"/>
<dbReference type="eggNOG" id="KOG1922">
    <property type="taxonomic scope" value="Eukaryota"/>
</dbReference>
<dbReference type="GeneTree" id="ENSGT00940000156452"/>
<dbReference type="HOGENOM" id="CLU_002356_1_0_1"/>
<dbReference type="InParanoid" id="Q8BPM0"/>
<dbReference type="OMA" id="AMLYFQE"/>
<dbReference type="OrthoDB" id="1104827at2759"/>
<dbReference type="PhylomeDB" id="Q8BPM0"/>
<dbReference type="TreeFam" id="TF314602"/>
<dbReference type="Reactome" id="R-MMU-4086400">
    <property type="pathway name" value="PCP/CE pathway"/>
</dbReference>
<dbReference type="Reactome" id="R-MMU-5663220">
    <property type="pathway name" value="RHO GTPases Activate Formins"/>
</dbReference>
<dbReference type="Reactome" id="R-MMU-8980692">
    <property type="pathway name" value="RHOA GTPase cycle"/>
</dbReference>
<dbReference type="Reactome" id="R-MMU-9013026">
    <property type="pathway name" value="RHOB GTPase cycle"/>
</dbReference>
<dbReference type="Reactome" id="R-MMU-9013106">
    <property type="pathway name" value="RHOC GTPase cycle"/>
</dbReference>
<dbReference type="BioGRID-ORCS" id="208846">
    <property type="hits" value="3 hits in 78 CRISPR screens"/>
</dbReference>
<dbReference type="CD-CODE" id="CE726F99">
    <property type="entry name" value="Postsynaptic density"/>
</dbReference>
<dbReference type="ChiTaRS" id="Daam1">
    <property type="organism name" value="mouse"/>
</dbReference>
<dbReference type="PRO" id="PR:Q8BPM0"/>
<dbReference type="Proteomes" id="UP000000589">
    <property type="component" value="Chromosome 12"/>
</dbReference>
<dbReference type="RNAct" id="Q8BPM0">
    <property type="molecule type" value="protein"/>
</dbReference>
<dbReference type="Bgee" id="ENSMUSG00000034574">
    <property type="expression patterns" value="Expressed in otolith organ and 271 other cell types or tissues"/>
</dbReference>
<dbReference type="GO" id="GO:0036064">
    <property type="term" value="C:ciliary basal body"/>
    <property type="evidence" value="ECO:0007669"/>
    <property type="project" value="Ensembl"/>
</dbReference>
<dbReference type="GO" id="GO:0005829">
    <property type="term" value="C:cytosol"/>
    <property type="evidence" value="ECO:0007669"/>
    <property type="project" value="Ensembl"/>
</dbReference>
<dbReference type="GO" id="GO:0098978">
    <property type="term" value="C:glutamatergic synapse"/>
    <property type="evidence" value="ECO:0007669"/>
    <property type="project" value="Ensembl"/>
</dbReference>
<dbReference type="GO" id="GO:0031514">
    <property type="term" value="C:motile cilium"/>
    <property type="evidence" value="ECO:0007669"/>
    <property type="project" value="Ensembl"/>
</dbReference>
<dbReference type="GO" id="GO:0048471">
    <property type="term" value="C:perinuclear region of cytoplasm"/>
    <property type="evidence" value="ECO:0000314"/>
    <property type="project" value="UniProtKB"/>
</dbReference>
<dbReference type="GO" id="GO:0005886">
    <property type="term" value="C:plasma membrane"/>
    <property type="evidence" value="ECO:0007669"/>
    <property type="project" value="Ensembl"/>
</dbReference>
<dbReference type="GO" id="GO:0098793">
    <property type="term" value="C:presynapse"/>
    <property type="evidence" value="ECO:0007669"/>
    <property type="project" value="Ensembl"/>
</dbReference>
<dbReference type="GO" id="GO:0001725">
    <property type="term" value="C:stress fiber"/>
    <property type="evidence" value="ECO:0000314"/>
    <property type="project" value="UniProtKB"/>
</dbReference>
<dbReference type="GO" id="GO:0003779">
    <property type="term" value="F:actin binding"/>
    <property type="evidence" value="ECO:0007669"/>
    <property type="project" value="UniProtKB-KW"/>
</dbReference>
<dbReference type="GO" id="GO:0042802">
    <property type="term" value="F:identical protein binding"/>
    <property type="evidence" value="ECO:0007669"/>
    <property type="project" value="Ensembl"/>
</dbReference>
<dbReference type="GO" id="GO:0031267">
    <property type="term" value="F:small GTPase binding"/>
    <property type="evidence" value="ECO:0007669"/>
    <property type="project" value="InterPro"/>
</dbReference>
<dbReference type="GO" id="GO:0099140">
    <property type="term" value="P:presynaptic actin cytoskeleton organization"/>
    <property type="evidence" value="ECO:0007669"/>
    <property type="project" value="Ensembl"/>
</dbReference>
<dbReference type="GO" id="GO:0016055">
    <property type="term" value="P:Wnt signaling pathway"/>
    <property type="evidence" value="ECO:0007669"/>
    <property type="project" value="UniProtKB-KW"/>
</dbReference>
<dbReference type="FunFam" id="1.10.238.150:FF:000001">
    <property type="entry name" value="Dishevelled associated activator of morphogenesis 1"/>
    <property type="match status" value="1"/>
</dbReference>
<dbReference type="FunFam" id="1.20.120.330:FF:000010">
    <property type="entry name" value="Dishevelled associated activator of morphogenesis 1"/>
    <property type="match status" value="1"/>
</dbReference>
<dbReference type="FunFam" id="1.20.58.2220:FF:000002">
    <property type="entry name" value="Dishevelled associated activator of morphogenesis 1"/>
    <property type="match status" value="1"/>
</dbReference>
<dbReference type="FunFam" id="1.25.10.10:FF:000012">
    <property type="entry name" value="Dishevelled associated activator of morphogenesis 2"/>
    <property type="match status" value="1"/>
</dbReference>
<dbReference type="Gene3D" id="1.20.58.2220">
    <property type="entry name" value="Formin, FH2 domain"/>
    <property type="match status" value="1"/>
</dbReference>
<dbReference type="Gene3D" id="1.10.238.150">
    <property type="entry name" value="Formin, FH3 diaphanous domain"/>
    <property type="match status" value="1"/>
</dbReference>
<dbReference type="Gene3D" id="1.25.10.10">
    <property type="entry name" value="Leucine-rich Repeat Variant"/>
    <property type="match status" value="1"/>
</dbReference>
<dbReference type="Gene3D" id="1.20.120.330">
    <property type="entry name" value="Nucleotidyltransferases domain 2"/>
    <property type="match status" value="1"/>
</dbReference>
<dbReference type="InterPro" id="IPR011989">
    <property type="entry name" value="ARM-like"/>
</dbReference>
<dbReference type="InterPro" id="IPR016024">
    <property type="entry name" value="ARM-type_fold"/>
</dbReference>
<dbReference type="InterPro" id="IPR014767">
    <property type="entry name" value="DAD_dom"/>
</dbReference>
<dbReference type="InterPro" id="IPR015425">
    <property type="entry name" value="FH2_Formin"/>
</dbReference>
<dbReference type="InterPro" id="IPR042201">
    <property type="entry name" value="FH2_Formin_sf"/>
</dbReference>
<dbReference type="InterPro" id="IPR010472">
    <property type="entry name" value="FH3_dom"/>
</dbReference>
<dbReference type="InterPro" id="IPR051425">
    <property type="entry name" value="Formin_Homology"/>
</dbReference>
<dbReference type="InterPro" id="IPR014768">
    <property type="entry name" value="GBD/FH3_dom"/>
</dbReference>
<dbReference type="InterPro" id="IPR010473">
    <property type="entry name" value="GTPase-bd"/>
</dbReference>
<dbReference type="PANTHER" id="PTHR45725:SF16">
    <property type="entry name" value="DISHEVELED-ASSOCIATED ACTIVATOR OF MORPHOGENESIS 1"/>
    <property type="match status" value="1"/>
</dbReference>
<dbReference type="PANTHER" id="PTHR45725">
    <property type="entry name" value="FORMIN HOMOLOGY 2 FAMILY MEMBER"/>
    <property type="match status" value="1"/>
</dbReference>
<dbReference type="Pfam" id="PF06367">
    <property type="entry name" value="Drf_FH3"/>
    <property type="match status" value="1"/>
</dbReference>
<dbReference type="Pfam" id="PF06371">
    <property type="entry name" value="Drf_GBD"/>
    <property type="match status" value="1"/>
</dbReference>
<dbReference type="Pfam" id="PF02181">
    <property type="entry name" value="FH2"/>
    <property type="match status" value="1"/>
</dbReference>
<dbReference type="SMART" id="SM01139">
    <property type="entry name" value="Drf_FH3"/>
    <property type="match status" value="1"/>
</dbReference>
<dbReference type="SMART" id="SM01140">
    <property type="entry name" value="Drf_GBD"/>
    <property type="match status" value="1"/>
</dbReference>
<dbReference type="SMART" id="SM00498">
    <property type="entry name" value="FH2"/>
    <property type="match status" value="1"/>
</dbReference>
<dbReference type="SUPFAM" id="SSF48371">
    <property type="entry name" value="ARM repeat"/>
    <property type="match status" value="1"/>
</dbReference>
<dbReference type="SUPFAM" id="SSF101447">
    <property type="entry name" value="Formin homology 2 domain (FH2 domain)"/>
    <property type="match status" value="1"/>
</dbReference>
<dbReference type="PROSITE" id="PS51231">
    <property type="entry name" value="DAD"/>
    <property type="match status" value="1"/>
</dbReference>
<dbReference type="PROSITE" id="PS51444">
    <property type="entry name" value="FH2"/>
    <property type="match status" value="1"/>
</dbReference>
<dbReference type="PROSITE" id="PS51232">
    <property type="entry name" value="GBD_FH3"/>
    <property type="match status" value="1"/>
</dbReference>
<protein>
    <recommendedName>
        <fullName>Disheveled-associated activator of morphogenesis 1</fullName>
    </recommendedName>
</protein>
<sequence length="1077" mass="123370">MAPRKRGGRGISFIFCCFRNNDHPEITYRLRNDSNFALQTMEPALPMPPVEELDVMFSELVDELDLTDKHREAMFALPAEKKWQIYCSKKKDQEENKGATSWPEFYIDQLNSMAARKSLLALEKEEEEERSKTIESLKTALRTKPMRFVTRFIDLDGLSCILNFLKTMDYETSESRIHTSLIGCIKALMNNSQGRAHVLAHSESINVIAQSLSTENIKTKVAVLEILGAVCLVPGGHKKVLQAMLHYQKYASERTRFQTLINDLDKSTGRYRDEVSLKTAIMSFINAVLSQGAGVESLDFRLHLRYEFLMLGIQPVIDKLREHENSTLDRHLDFFEMLRNEDELEFAKRFELVHIDTKSATQMFELTRRRLTHSEAYPHFMSILHHCLQMPYKRSGNTVQYWLLLDRIIQQIVIQNDKGQDPDSTPLENFNIKNVVRMLVNENEVKQWKEQAEKMRKEHNELQQKLEKKERECDAKTQEKEEMMQTLNKMKEKLEKETTEHKQVKQQVADLTAQLHELNRRAVCAAVPGGPSPGAPGGPFPSSGLGSLLPPPPPPLLSGGALPPPPPPLPPGGPPPPPGPPPLGGVLPPPGAPVSLTLKKKNIPQPTNALKSFNWSKLPENKLDGTVWTEIDDTKVFKILDLEDLERTFSAYQRQQEFFVNNSKQKEADAIDDTLSSKLKVKELSVIDGRRAQNCNILLSRLKLSNDEIKRAILTMDEQEDLPKDMLEQLLKFVPEKSDIDLLEEHKHELDRMAKADRFLFEMSRINHYQQRLQSLYFKKKFAERVAEVKPKVEAIRSGSEEVFRSRALKQLLEVVLAFGNYMNKGQRGNAYGFKISSLNKIADTKSSIDKNITLLHYLITIVENKYPKVLNLSEELRDIPQAAKVNMTELDKEISTLRSGLKAVETELEYQKSQPPQPGDKFVSVVSQFITLASFSFSDVEDLLAEAKELFTKAVKHFGEEAGKIQPDEFFGIFDQFLQAVAEAKQENENMRKRKEEEERRARLEAQLKEQRERERKVRKAKESSEESGEFDDLVSALRSGEVFDKDLSKLKRNRKRISNQVTDSSRERPITKLNF</sequence>
<gene>
    <name type="primary">Daam1</name>
</gene>
<name>DAAM1_MOUSE</name>
<comment type="function">
    <text evidence="2 4 12 13">Binds to disheveled (Dvl) and Rho, and mediates Wnt-induced Dvl-Rho complex formation. May play a role as a scaffolding protein to recruit Rho-GDP and Rho-GEF, thereby enhancing Rho-GTP formation. Can direct nucleation and elongation of new actin filaments (By similarity). Involved in building functional cilia. Involved in the organization of the subapical actin network in multiciliated epithelial cells (By similarity). Together with DAAM2, required for myocardial maturation and sarcomere assembly (PubMed:26526197). During cell division, may regulate RHOA activation that signals spindle orientation and chromosomal segregation.</text>
</comment>
<comment type="subunit">
    <text evidence="4">Interacts with CIP4, FNBP1 and FNBP1L. Interacts with the SH3 domains of Abl, BTK, endophilin, spectrin and SRC. Binds specifically to GTP-bound CDC42 and RHOA. Interacts with INTU; INTU mediates the indirect interaction between DAAM1 and NPHP4 (By similarity). Interacts (via coiled coil domain) with KANK1 (via coiled coil domain).</text>
</comment>
<comment type="interaction">
    <interactant intactId="EBI-772938">
        <id>Q8BPM0</id>
    </interactant>
    <interactant intactId="EBI-6169263">
        <id>O15085-2</id>
        <label>ARHGEF11</label>
    </interactant>
    <organismsDiffer>true</organismsDiffer>
    <experiments>3</experiments>
</comment>
<comment type="subcellular location">
    <subcellularLocation>
        <location evidence="14">Cytoplasm</location>
    </subcellularLocation>
    <subcellularLocation>
        <location evidence="4">Cytoplasm</location>
        <location evidence="4">Cytoskeleton</location>
        <location evidence="4">Cilium basal body</location>
    </subcellularLocation>
    <text evidence="13 14">Perinuclear. Colocalizes with RHOA and KANK1 around centrosomes.</text>
</comment>
<comment type="alternative products">
    <event type="alternative splicing"/>
    <isoform>
        <id>Q8BPM0-1</id>
        <name>1</name>
        <sequence type="displayed"/>
    </isoform>
    <isoform>
        <id>Q8BPM0-2</id>
        <name>2</name>
        <sequence type="described" ref="VSP_027771"/>
    </isoform>
    <isoform>
        <id>Q8BPM0-3</id>
        <name>3</name>
        <sequence type="described" ref="VSP_027772 VSP_027773"/>
    </isoform>
</comment>
<comment type="tissue specificity">
    <text evidence="10 11">In early embryogenesis, expressed in embryonic and extraembryonic ectoderm. In later stages of gastrulation, expressed also in somites and ribs and posterior vertebrae of developing skeletal system. During organogenesis, expressed in CNS, PNS, stomach, liver and limb bud.</text>
</comment>
<comment type="developmental stage">
    <text evidence="12">Detected throughout the myocardial layer of the heart tube. Not expressed in the myocardium at 9.5 dpc but is present in epicardial cells and the pro-epicardial organ. At 10.5 dpc, expressed in the atrial and ventricular myocardia as well as the inter-ventricular septum. Continues to localize to the atrial and ventricular myocardia at 12.5 dpc as well as the ventricular trabeculae.</text>
</comment>
<comment type="domain">
    <text>The C-terminal DAD domain may participate in intramolecular interactions with the N-terminus.</text>
</comment>
<comment type="domain">
    <text evidence="3">The DAD domain regulates activation via by an autoinhibitory interaction with the GBD/FH3 domain. This autoinhibition is released upon competitive binding of an activated GTPase. The release of DAD allows the FH2 domain to then nucleate and elongate nonbranched actin filaments (By similarity).</text>
</comment>
<comment type="disruption phenotype">
    <text evidence="12">Conditional knockout mice lacking Daam1 in myocardial cells show cardiomyopathy. Conditional knockout mice lacking Daam1 and Daam2 in myocardial cells show stronger cardiomyopathy.</text>
</comment>
<comment type="similarity">
    <text evidence="17">Belongs to the formin homology family.</text>
</comment>
<comment type="sequence caution" evidence="17">
    <conflict type="erroneous initiation">
        <sequence resource="EMBL-CDS" id="AAH48856"/>
    </conflict>
</comment>